<protein>
    <recommendedName>
        <fullName evidence="1">Glutamine--tRNA ligase</fullName>
        <ecNumber evidence="1">6.1.1.18</ecNumber>
    </recommendedName>
    <alternativeName>
        <fullName evidence="1">Glutaminyl-tRNA synthetase</fullName>
        <shortName evidence="1">GlnRS</shortName>
    </alternativeName>
</protein>
<accession>A4VL72</accession>
<sequence>MSKPETPAASNFLRPIVQADLDSGKHAKIITRFPPEPNGYLHIGHAKSICLNFGLAKEFGGECNLRFDDTNPAKEDQEYIDAIKSDVQWLGFQWAGEERYASDYFDQLHDWAVHLIKAGKAYVCDLTPEQAREYRGSLTEPGTNSPFRERSVEENLDLFARMKAGEFPDGARALRAKIDMASPNMNLRDPILYRIRHAHHHQTGDKWCIYPSYDFTHGQSDAIEGITHSICTLEFEDHRPLYEWFLANLPVPAQPRQYEFARLNLNYTITSKRKLKQLVDEKHVSGWDDPRMSTLSGFRRRGYTPASIRNFCDMIGVNRAGGVVDIGMLEFAIREDLDANAARAMCVLKPLKVVITNYPQDQVENLELPRHPKQDMGVRVLPFSREIYIDAGDFEEVPPAGFKRLVPGGEVRLRGSYVIRADEAVKDDQGNIVELRCSYDENTLGKNPEGRKVKGVIHWVPAAESVECEVRLYDRLFRSANPEKDEEGGSFLDNINPESLVVLKGCRAEPSLANAAPEERFQFEREGYFCADMKDSKPGAPVFNRTVTLRDSWGQ</sequence>
<name>SYQ_STUS1</name>
<comment type="catalytic activity">
    <reaction evidence="1">
        <text>tRNA(Gln) + L-glutamine + ATP = L-glutaminyl-tRNA(Gln) + AMP + diphosphate</text>
        <dbReference type="Rhea" id="RHEA:20121"/>
        <dbReference type="Rhea" id="RHEA-COMP:9662"/>
        <dbReference type="Rhea" id="RHEA-COMP:9681"/>
        <dbReference type="ChEBI" id="CHEBI:30616"/>
        <dbReference type="ChEBI" id="CHEBI:33019"/>
        <dbReference type="ChEBI" id="CHEBI:58359"/>
        <dbReference type="ChEBI" id="CHEBI:78442"/>
        <dbReference type="ChEBI" id="CHEBI:78521"/>
        <dbReference type="ChEBI" id="CHEBI:456215"/>
        <dbReference type="EC" id="6.1.1.18"/>
    </reaction>
</comment>
<comment type="subunit">
    <text evidence="1">Monomer.</text>
</comment>
<comment type="subcellular location">
    <subcellularLocation>
        <location evidence="1">Cytoplasm</location>
    </subcellularLocation>
</comment>
<comment type="similarity">
    <text evidence="1">Belongs to the class-I aminoacyl-tRNA synthetase family.</text>
</comment>
<gene>
    <name evidence="1" type="primary">glnS</name>
    <name type="ordered locus">PST_2052</name>
</gene>
<reference key="1">
    <citation type="journal article" date="2008" name="Proc. Natl. Acad. Sci. U.S.A.">
        <title>Nitrogen fixation island and rhizosphere competence traits in the genome of root-associated Pseudomonas stutzeri A1501.</title>
        <authorList>
            <person name="Yan Y."/>
            <person name="Yang J."/>
            <person name="Dou Y."/>
            <person name="Chen M."/>
            <person name="Ping S."/>
            <person name="Peng J."/>
            <person name="Lu W."/>
            <person name="Zhang W."/>
            <person name="Yao Z."/>
            <person name="Li H."/>
            <person name="Liu W."/>
            <person name="He S."/>
            <person name="Geng L."/>
            <person name="Zhang X."/>
            <person name="Yang F."/>
            <person name="Yu H."/>
            <person name="Zhan Y."/>
            <person name="Li D."/>
            <person name="Lin Z."/>
            <person name="Wang Y."/>
            <person name="Elmerich C."/>
            <person name="Lin M."/>
            <person name="Jin Q."/>
        </authorList>
    </citation>
    <scope>NUCLEOTIDE SEQUENCE [LARGE SCALE GENOMIC DNA]</scope>
    <source>
        <strain>A1501</strain>
    </source>
</reference>
<proteinExistence type="inferred from homology"/>
<organism>
    <name type="scientific">Stutzerimonas stutzeri (strain A1501)</name>
    <name type="common">Pseudomonas stutzeri</name>
    <dbReference type="NCBI Taxonomy" id="379731"/>
    <lineage>
        <taxon>Bacteria</taxon>
        <taxon>Pseudomonadati</taxon>
        <taxon>Pseudomonadota</taxon>
        <taxon>Gammaproteobacteria</taxon>
        <taxon>Pseudomonadales</taxon>
        <taxon>Pseudomonadaceae</taxon>
        <taxon>Stutzerimonas</taxon>
    </lineage>
</organism>
<evidence type="ECO:0000255" key="1">
    <source>
        <dbReference type="HAMAP-Rule" id="MF_00126"/>
    </source>
</evidence>
<dbReference type="EC" id="6.1.1.18" evidence="1"/>
<dbReference type="EMBL" id="CP000304">
    <property type="protein sequence ID" value="ABP79723.1"/>
    <property type="molecule type" value="Genomic_DNA"/>
</dbReference>
<dbReference type="RefSeq" id="WP_011913192.1">
    <property type="nucleotide sequence ID" value="NC_009434.1"/>
</dbReference>
<dbReference type="SMR" id="A4VL72"/>
<dbReference type="KEGG" id="psa:PST_2052"/>
<dbReference type="eggNOG" id="COG0008">
    <property type="taxonomic scope" value="Bacteria"/>
</dbReference>
<dbReference type="HOGENOM" id="CLU_001882_2_3_6"/>
<dbReference type="Proteomes" id="UP000000233">
    <property type="component" value="Chromosome"/>
</dbReference>
<dbReference type="GO" id="GO:0005829">
    <property type="term" value="C:cytosol"/>
    <property type="evidence" value="ECO:0007669"/>
    <property type="project" value="TreeGrafter"/>
</dbReference>
<dbReference type="GO" id="GO:0005524">
    <property type="term" value="F:ATP binding"/>
    <property type="evidence" value="ECO:0007669"/>
    <property type="project" value="UniProtKB-UniRule"/>
</dbReference>
<dbReference type="GO" id="GO:0004819">
    <property type="term" value="F:glutamine-tRNA ligase activity"/>
    <property type="evidence" value="ECO:0007669"/>
    <property type="project" value="UniProtKB-UniRule"/>
</dbReference>
<dbReference type="GO" id="GO:0006425">
    <property type="term" value="P:glutaminyl-tRNA aminoacylation"/>
    <property type="evidence" value="ECO:0007669"/>
    <property type="project" value="InterPro"/>
</dbReference>
<dbReference type="GO" id="GO:0006424">
    <property type="term" value="P:glutamyl-tRNA aminoacylation"/>
    <property type="evidence" value="ECO:0007669"/>
    <property type="project" value="UniProtKB-UniRule"/>
</dbReference>
<dbReference type="CDD" id="cd00807">
    <property type="entry name" value="GlnRS_core"/>
    <property type="match status" value="1"/>
</dbReference>
<dbReference type="FunFam" id="1.10.1160.10:FF:000001">
    <property type="entry name" value="Glutamine--tRNA ligase"/>
    <property type="match status" value="1"/>
</dbReference>
<dbReference type="FunFam" id="2.40.240.10:FF:000001">
    <property type="entry name" value="Glutamine--tRNA ligase"/>
    <property type="match status" value="1"/>
</dbReference>
<dbReference type="FunFam" id="3.90.800.10:FF:000001">
    <property type="entry name" value="Glutamine--tRNA ligase"/>
    <property type="match status" value="1"/>
</dbReference>
<dbReference type="FunFam" id="3.40.50.620:FF:000037">
    <property type="entry name" value="Glutamine--tRNA ligase cytoplasmic"/>
    <property type="match status" value="1"/>
</dbReference>
<dbReference type="Gene3D" id="1.10.1160.10">
    <property type="entry name" value="Glutamyl-trna Synthetase, Domain 2"/>
    <property type="match status" value="1"/>
</dbReference>
<dbReference type="Gene3D" id="3.90.800.10">
    <property type="entry name" value="Glutamyl-tRNA Synthetase, Domain 3"/>
    <property type="match status" value="1"/>
</dbReference>
<dbReference type="Gene3D" id="3.40.50.620">
    <property type="entry name" value="HUPs"/>
    <property type="match status" value="1"/>
</dbReference>
<dbReference type="Gene3D" id="2.40.240.10">
    <property type="entry name" value="Ribosomal Protein L25, Chain P"/>
    <property type="match status" value="2"/>
</dbReference>
<dbReference type="HAMAP" id="MF_00126">
    <property type="entry name" value="Gln_tRNA_synth"/>
    <property type="match status" value="1"/>
</dbReference>
<dbReference type="InterPro" id="IPR001412">
    <property type="entry name" value="aa-tRNA-synth_I_CS"/>
</dbReference>
<dbReference type="InterPro" id="IPR004514">
    <property type="entry name" value="Gln-tRNA-synth"/>
</dbReference>
<dbReference type="InterPro" id="IPR050132">
    <property type="entry name" value="Gln/Glu-tRNA_Ligase"/>
</dbReference>
<dbReference type="InterPro" id="IPR022861">
    <property type="entry name" value="Gln_tRNA_ligase_bac"/>
</dbReference>
<dbReference type="InterPro" id="IPR000924">
    <property type="entry name" value="Glu/Gln-tRNA-synth"/>
</dbReference>
<dbReference type="InterPro" id="IPR020058">
    <property type="entry name" value="Glu/Gln-tRNA-synth_Ib_cat-dom"/>
</dbReference>
<dbReference type="InterPro" id="IPR020059">
    <property type="entry name" value="Glu/Gln-tRNA-synth_Ib_codon-bd"/>
</dbReference>
<dbReference type="InterPro" id="IPR020061">
    <property type="entry name" value="Glu_tRNA_lig_a-bdl"/>
</dbReference>
<dbReference type="InterPro" id="IPR020056">
    <property type="entry name" value="Rbsml_bL25/Gln-tRNA_synth_N"/>
</dbReference>
<dbReference type="InterPro" id="IPR011035">
    <property type="entry name" value="Ribosomal_bL25/Gln-tRNA_synth"/>
</dbReference>
<dbReference type="InterPro" id="IPR014729">
    <property type="entry name" value="Rossmann-like_a/b/a_fold"/>
</dbReference>
<dbReference type="InterPro" id="IPR049437">
    <property type="entry name" value="tRNA-synt_1c_C2"/>
</dbReference>
<dbReference type="NCBIfam" id="TIGR00440">
    <property type="entry name" value="glnS"/>
    <property type="match status" value="1"/>
</dbReference>
<dbReference type="NCBIfam" id="NF011291">
    <property type="entry name" value="PRK14703.1"/>
    <property type="match status" value="1"/>
</dbReference>
<dbReference type="PANTHER" id="PTHR43097:SF5">
    <property type="entry name" value="GLUTAMATE--TRNA LIGASE"/>
    <property type="match status" value="1"/>
</dbReference>
<dbReference type="PANTHER" id="PTHR43097">
    <property type="entry name" value="GLUTAMINE-TRNA LIGASE"/>
    <property type="match status" value="1"/>
</dbReference>
<dbReference type="Pfam" id="PF00749">
    <property type="entry name" value="tRNA-synt_1c"/>
    <property type="match status" value="1"/>
</dbReference>
<dbReference type="Pfam" id="PF03950">
    <property type="entry name" value="tRNA-synt_1c_C"/>
    <property type="match status" value="1"/>
</dbReference>
<dbReference type="Pfam" id="PF20974">
    <property type="entry name" value="tRNA-synt_1c_C2"/>
    <property type="match status" value="1"/>
</dbReference>
<dbReference type="PRINTS" id="PR00987">
    <property type="entry name" value="TRNASYNTHGLU"/>
</dbReference>
<dbReference type="SUPFAM" id="SSF52374">
    <property type="entry name" value="Nucleotidylyl transferase"/>
    <property type="match status" value="1"/>
</dbReference>
<dbReference type="SUPFAM" id="SSF50715">
    <property type="entry name" value="Ribosomal protein L25-like"/>
    <property type="match status" value="1"/>
</dbReference>
<dbReference type="PROSITE" id="PS00178">
    <property type="entry name" value="AA_TRNA_LIGASE_I"/>
    <property type="match status" value="1"/>
</dbReference>
<keyword id="KW-0030">Aminoacyl-tRNA synthetase</keyword>
<keyword id="KW-0067">ATP-binding</keyword>
<keyword id="KW-0963">Cytoplasm</keyword>
<keyword id="KW-0436">Ligase</keyword>
<keyword id="KW-0547">Nucleotide-binding</keyword>
<keyword id="KW-0648">Protein biosynthesis</keyword>
<keyword id="KW-1185">Reference proteome</keyword>
<feature type="chain" id="PRO_1000095503" description="Glutamine--tRNA ligase">
    <location>
        <begin position="1"/>
        <end position="555"/>
    </location>
</feature>
<feature type="short sequence motif" description="'HIGH' region" evidence="1">
    <location>
        <begin position="35"/>
        <end position="45"/>
    </location>
</feature>
<feature type="short sequence motif" description="'KMSKS' region" evidence="1">
    <location>
        <begin position="269"/>
        <end position="273"/>
    </location>
</feature>
<feature type="binding site" evidence="1">
    <location>
        <begin position="36"/>
        <end position="38"/>
    </location>
    <ligand>
        <name>ATP</name>
        <dbReference type="ChEBI" id="CHEBI:30616"/>
    </ligand>
</feature>
<feature type="binding site" evidence="1">
    <location>
        <begin position="42"/>
        <end position="48"/>
    </location>
    <ligand>
        <name>ATP</name>
        <dbReference type="ChEBI" id="CHEBI:30616"/>
    </ligand>
</feature>
<feature type="binding site" evidence="1">
    <location>
        <position position="68"/>
    </location>
    <ligand>
        <name>L-glutamine</name>
        <dbReference type="ChEBI" id="CHEBI:58359"/>
    </ligand>
</feature>
<feature type="binding site" evidence="1">
    <location>
        <position position="213"/>
    </location>
    <ligand>
        <name>L-glutamine</name>
        <dbReference type="ChEBI" id="CHEBI:58359"/>
    </ligand>
</feature>
<feature type="binding site" evidence="1">
    <location>
        <position position="232"/>
    </location>
    <ligand>
        <name>ATP</name>
        <dbReference type="ChEBI" id="CHEBI:30616"/>
    </ligand>
</feature>
<feature type="binding site" evidence="1">
    <location>
        <begin position="262"/>
        <end position="263"/>
    </location>
    <ligand>
        <name>ATP</name>
        <dbReference type="ChEBI" id="CHEBI:30616"/>
    </ligand>
</feature>